<protein>
    <recommendedName>
        <fullName evidence="1">Serine/threonine transporter SstT</fullName>
    </recommendedName>
    <alternativeName>
        <fullName evidence="1">Na(+)/serine-threonine symporter</fullName>
    </alternativeName>
</protein>
<gene>
    <name evidence="1" type="primary">sstT</name>
    <name type="ordered locus">NMB2133</name>
</gene>
<comment type="function">
    <text evidence="1">Involved in the import of serine and threonine into the cell, with the concomitant import of sodium (symport system).</text>
</comment>
<comment type="catalytic activity">
    <reaction evidence="1">
        <text>L-serine(in) + Na(+)(in) = L-serine(out) + Na(+)(out)</text>
        <dbReference type="Rhea" id="RHEA:29575"/>
        <dbReference type="ChEBI" id="CHEBI:29101"/>
        <dbReference type="ChEBI" id="CHEBI:33384"/>
    </reaction>
    <physiologicalReaction direction="right-to-left" evidence="1">
        <dbReference type="Rhea" id="RHEA:29577"/>
    </physiologicalReaction>
</comment>
<comment type="catalytic activity">
    <reaction evidence="1">
        <text>L-threonine(in) + Na(+)(in) = L-threonine(out) + Na(+)(out)</text>
        <dbReference type="Rhea" id="RHEA:69999"/>
        <dbReference type="ChEBI" id="CHEBI:29101"/>
        <dbReference type="ChEBI" id="CHEBI:57926"/>
    </reaction>
    <physiologicalReaction direction="right-to-left" evidence="1">
        <dbReference type="Rhea" id="RHEA:70001"/>
    </physiologicalReaction>
</comment>
<comment type="subcellular location">
    <subcellularLocation>
        <location evidence="1">Cell inner membrane</location>
        <topology evidence="1">Multi-pass membrane protein</topology>
    </subcellularLocation>
</comment>
<comment type="similarity">
    <text evidence="1">Belongs to the dicarboxylate/amino acid:cation symporter (DAACS) (TC 2.A.23) family.</text>
</comment>
<dbReference type="EMBL" id="AE002098">
    <property type="protein sequence ID" value="AAF42441.1"/>
    <property type="molecule type" value="Genomic_DNA"/>
</dbReference>
<dbReference type="PIR" id="F81003">
    <property type="entry name" value="F81003"/>
</dbReference>
<dbReference type="RefSeq" id="NP_275118.1">
    <property type="nucleotide sequence ID" value="NC_003112.2"/>
</dbReference>
<dbReference type="RefSeq" id="WP_002225733.1">
    <property type="nucleotide sequence ID" value="NC_003112.2"/>
</dbReference>
<dbReference type="SMR" id="Q9JXB8"/>
<dbReference type="FunCoup" id="Q9JXB8">
    <property type="interactions" value="23"/>
</dbReference>
<dbReference type="STRING" id="122586.NMB2133"/>
<dbReference type="PaxDb" id="122586-NMB2133"/>
<dbReference type="KEGG" id="nme:NMB2133"/>
<dbReference type="PATRIC" id="fig|122586.8.peg.2718"/>
<dbReference type="HOGENOM" id="CLU_044581_0_0_4"/>
<dbReference type="InParanoid" id="Q9JXB8"/>
<dbReference type="OrthoDB" id="9768885at2"/>
<dbReference type="Proteomes" id="UP000000425">
    <property type="component" value="Chromosome"/>
</dbReference>
<dbReference type="GO" id="GO:0005886">
    <property type="term" value="C:plasma membrane"/>
    <property type="evidence" value="ECO:0000318"/>
    <property type="project" value="GO_Central"/>
</dbReference>
<dbReference type="GO" id="GO:0005295">
    <property type="term" value="F:neutral L-amino acid:sodium symporter activity"/>
    <property type="evidence" value="ECO:0000318"/>
    <property type="project" value="GO_Central"/>
</dbReference>
<dbReference type="GO" id="GO:0032329">
    <property type="term" value="P:serine transport"/>
    <property type="evidence" value="ECO:0000318"/>
    <property type="project" value="GO_Central"/>
</dbReference>
<dbReference type="GO" id="GO:0015826">
    <property type="term" value="P:threonine transport"/>
    <property type="evidence" value="ECO:0007669"/>
    <property type="project" value="InterPro"/>
</dbReference>
<dbReference type="FunFam" id="1.10.3860.10:FF:000003">
    <property type="entry name" value="Serine/threonine transporter sstT"/>
    <property type="match status" value="1"/>
</dbReference>
<dbReference type="Gene3D" id="1.10.3860.10">
    <property type="entry name" value="Sodium:dicarboxylate symporter"/>
    <property type="match status" value="1"/>
</dbReference>
<dbReference type="HAMAP" id="MF_01582">
    <property type="entry name" value="Ser_Thr_transp_SstT"/>
    <property type="match status" value="1"/>
</dbReference>
<dbReference type="InterPro" id="IPR001991">
    <property type="entry name" value="Na-dicarboxylate_symporter"/>
</dbReference>
<dbReference type="InterPro" id="IPR036458">
    <property type="entry name" value="Na:dicarbo_symporter_sf"/>
</dbReference>
<dbReference type="InterPro" id="IPR023025">
    <property type="entry name" value="Ser_Thr_transp_SstT"/>
</dbReference>
<dbReference type="NCBIfam" id="NF010151">
    <property type="entry name" value="PRK13628.1"/>
    <property type="match status" value="1"/>
</dbReference>
<dbReference type="PANTHER" id="PTHR42865">
    <property type="entry name" value="PROTON/GLUTAMATE-ASPARTATE SYMPORTER"/>
    <property type="match status" value="1"/>
</dbReference>
<dbReference type="PANTHER" id="PTHR42865:SF8">
    <property type="entry name" value="SERINE_THREONINE TRANSPORTER SSTT"/>
    <property type="match status" value="1"/>
</dbReference>
<dbReference type="Pfam" id="PF00375">
    <property type="entry name" value="SDF"/>
    <property type="match status" value="1"/>
</dbReference>
<dbReference type="PRINTS" id="PR00173">
    <property type="entry name" value="EDTRNSPORT"/>
</dbReference>
<dbReference type="SUPFAM" id="SSF118215">
    <property type="entry name" value="Proton glutamate symport protein"/>
    <property type="match status" value="1"/>
</dbReference>
<keyword id="KW-0029">Amino-acid transport</keyword>
<keyword id="KW-0997">Cell inner membrane</keyword>
<keyword id="KW-1003">Cell membrane</keyword>
<keyword id="KW-0472">Membrane</keyword>
<keyword id="KW-1185">Reference proteome</keyword>
<keyword id="KW-0769">Symport</keyword>
<keyword id="KW-0812">Transmembrane</keyword>
<keyword id="KW-1133">Transmembrane helix</keyword>
<keyword id="KW-0813">Transport</keyword>
<reference key="1">
    <citation type="journal article" date="2000" name="Science">
        <title>Complete genome sequence of Neisseria meningitidis serogroup B strain MC58.</title>
        <authorList>
            <person name="Tettelin H."/>
            <person name="Saunders N.J."/>
            <person name="Heidelberg J.F."/>
            <person name="Jeffries A.C."/>
            <person name="Nelson K.E."/>
            <person name="Eisen J.A."/>
            <person name="Ketchum K.A."/>
            <person name="Hood D.W."/>
            <person name="Peden J.F."/>
            <person name="Dodson R.J."/>
            <person name="Nelson W.C."/>
            <person name="Gwinn M.L."/>
            <person name="DeBoy R.T."/>
            <person name="Peterson J.D."/>
            <person name="Hickey E.K."/>
            <person name="Haft D.H."/>
            <person name="Salzberg S.L."/>
            <person name="White O."/>
            <person name="Fleischmann R.D."/>
            <person name="Dougherty B.A."/>
            <person name="Mason T.M."/>
            <person name="Ciecko A."/>
            <person name="Parksey D.S."/>
            <person name="Blair E."/>
            <person name="Cittone H."/>
            <person name="Clark E.B."/>
            <person name="Cotton M.D."/>
            <person name="Utterback T.R."/>
            <person name="Khouri H.M."/>
            <person name="Qin H."/>
            <person name="Vamathevan J.J."/>
            <person name="Gill J."/>
            <person name="Scarlato V."/>
            <person name="Masignani V."/>
            <person name="Pizza M."/>
            <person name="Grandi G."/>
            <person name="Sun L."/>
            <person name="Smith H.O."/>
            <person name="Fraser C.M."/>
            <person name="Moxon E.R."/>
            <person name="Rappuoli R."/>
            <person name="Venter J.C."/>
        </authorList>
    </citation>
    <scope>NUCLEOTIDE SEQUENCE [LARGE SCALE GENOMIC DNA]</scope>
    <source>
        <strain>ATCC BAA-335 / MC58</strain>
    </source>
</reference>
<sequence length="409" mass="41942">MAFGKSLFHAIGRVSLVRQIAAGLALGIVIGSVSPQLGLAAGLFGSLFVGALKAVAPVLVFILVAATIAQHQKGNKAHIRPIIVLYLIGTFSAALTAVIAGMVFPTHIVLAGAGDVSAAPPSGIVEVLKSLLMNLVANPINAIANANYIGILAWALVLGAALRNHGSDVTRQVVADLAEAVSTVVKWIIRFAPLGIFGLVSSTIAETGFGALAGYAKLLAVLLGCMAFIALAVNPAIVWWKIRRNPFPLVFTCLRESGVYAFFTRSSAANIPVNMALAKKLGLHEDTYSISIPLGATINMAGAAITITVLAMAAAHTQGITVDFATALLLSLVATVSACGASGVAGGSLLLIPLACSLFGIDNDVAMQVVAVGFIIGVIQDSAETALNSSTDVLFTAAADLGRQRNRAE</sequence>
<accession>Q9JXB8</accession>
<feature type="chain" id="PRO_0000309101" description="Serine/threonine transporter SstT">
    <location>
        <begin position="1"/>
        <end position="409"/>
    </location>
</feature>
<feature type="transmembrane region" description="Helical" evidence="1">
    <location>
        <begin position="24"/>
        <end position="44"/>
    </location>
</feature>
<feature type="transmembrane region" description="Helical" evidence="1">
    <location>
        <begin position="48"/>
        <end position="68"/>
    </location>
</feature>
<feature type="transmembrane region" description="Helical" evidence="1">
    <location>
        <begin position="82"/>
        <end position="102"/>
    </location>
</feature>
<feature type="transmembrane region" description="Helical" evidence="1">
    <location>
        <begin position="142"/>
        <end position="162"/>
    </location>
</feature>
<feature type="transmembrane region" description="Helical" evidence="1">
    <location>
        <begin position="194"/>
        <end position="214"/>
    </location>
</feature>
<feature type="transmembrane region" description="Helical" evidence="1">
    <location>
        <begin position="218"/>
        <end position="238"/>
    </location>
</feature>
<feature type="transmembrane region" description="Helical" evidence="1">
    <location>
        <begin position="292"/>
        <end position="312"/>
    </location>
</feature>
<feature type="transmembrane region" description="Helical" evidence="1">
    <location>
        <begin position="319"/>
        <end position="339"/>
    </location>
</feature>
<evidence type="ECO:0000255" key="1">
    <source>
        <dbReference type="HAMAP-Rule" id="MF_01582"/>
    </source>
</evidence>
<organism>
    <name type="scientific">Neisseria meningitidis serogroup B (strain ATCC BAA-335 / MC58)</name>
    <dbReference type="NCBI Taxonomy" id="122586"/>
    <lineage>
        <taxon>Bacteria</taxon>
        <taxon>Pseudomonadati</taxon>
        <taxon>Pseudomonadota</taxon>
        <taxon>Betaproteobacteria</taxon>
        <taxon>Neisseriales</taxon>
        <taxon>Neisseriaceae</taxon>
        <taxon>Neisseria</taxon>
    </lineage>
</organism>
<name>SSTT_NEIMB</name>
<proteinExistence type="inferred from homology"/>